<proteinExistence type="inferred from homology"/>
<comment type="function">
    <text evidence="3 5 6 7">V region of the variable domain of T cell receptor (TR) alpha chain that participates in the antigen recognition (PubMed:24600447). Alpha-beta T cell receptors are antigen specific receptors which are essential to the immune response and are present on the cell surface of T lymphocytes. Recognize peptide-major histocompatibility (MH) (pMH) complexes that are displayed by antigen presenting cells (APC), a prerequisite for efficient T cell adaptive immunity against pathogens (PubMed:25493333). Binding of alpha-beta TR to pMH complex initiates TR-CD3 clustering on the cell surface and intracellular activation of LCK that phosphorylates the ITAM motifs of CD3G, CD3D, CD3E and CD247 enabling the recruitment of ZAP70. In turn ZAP70 phosphorylates LAT, which recruits numerous signaling molecules to form the LAT signalosome. The LAT signalosome propagates signal branching to three major signaling pathways, the calcium, the mitogen-activated protein kinase (MAPK) kinase and the nuclear factor NF-kappa-B (NF-kB) pathways, leading to the mobilization of transcription factors that are critical for gene expression and essential for T cell growth and differentiation (PubMed:23524462). The T cell repertoire is generated in the thymus, by V-(D)-J rearrangement. This repertoire is then shaped by intrathymic selection events to generate a peripheral T cell pool of self-MH restricted, non-autoaggressive T cells. Post-thymic interaction of alpha-beta TR with the pMH complexes shapes TR structural and functional avidity (PubMed:15040585).</text>
</comment>
<comment type="subunit">
    <text evidence="4">Alpha-beta TR is a heterodimer composed of an alpha and beta chain; disulfide-linked. The alpha-beta TR is associated with the transmembrane signaling CD3 coreceptor proteins to form the TR-CD3 (TcR or TCR). The assembly of alpha-beta TR heterodimers with CD3 occurs in the endoplasmic reticulum where a single alpha-beta TR heterodimer associates with one CD3D-CD3E heterodimer, one CD3G-CD3E heterodimer and one CD247 homodimer forming a stable octameric structure. CD3D-CD3E and CD3G-CD3E heterodimers preferentially associate with TR alpha and TR beta chains, respectively. The association of the CD247 homodimer is the last step of TcR assembly in the endoplasmic reticulum and is required for transport to the cell surface.</text>
</comment>
<comment type="subcellular location">
    <subcellularLocation>
        <location evidence="4">Cell membrane</location>
    </subcellularLocation>
</comment>
<comment type="polymorphism">
    <text evidence="9">There are several alleles. The sequence shown is that of IMGT allele TRAV23/DV6*01.</text>
</comment>
<evidence type="ECO:0000255" key="1"/>
<evidence type="ECO:0000255" key="2">
    <source>
        <dbReference type="PROSITE-ProRule" id="PRU00114"/>
    </source>
</evidence>
<evidence type="ECO:0000303" key="3">
    <source>
    </source>
</evidence>
<evidence type="ECO:0000303" key="4">
    <source>
    </source>
</evidence>
<evidence type="ECO:0000303" key="5">
    <source>
    </source>
</evidence>
<evidence type="ECO:0000303" key="6">
    <source>
    </source>
</evidence>
<evidence type="ECO:0000303" key="7">
    <source>
    </source>
</evidence>
<evidence type="ECO:0000303" key="8">
    <source ref="2"/>
</evidence>
<evidence type="ECO:0000305" key="9"/>
<gene>
    <name evidence="8" type="primary">TRAV23DV6</name>
</gene>
<protein>
    <recommendedName>
        <fullName evidence="8">T cell receptor alpha variable 23/delta variable 6</fullName>
    </recommendedName>
</protein>
<feature type="signal peptide" evidence="1">
    <location>
        <begin position="1"/>
        <end position="21"/>
    </location>
</feature>
<feature type="chain" id="PRO_5001705209" description="T cell receptor alpha variable 23/delta variable 6" evidence="1">
    <location>
        <begin position="22"/>
        <end position="121"/>
    </location>
</feature>
<feature type="domain" description="Ig-like" evidence="2">
    <location>
        <begin position="30"/>
        <end position="121" status="greater than"/>
    </location>
</feature>
<feature type="glycosylation site" description="N-linked (GlcNAc...) asparagine" evidence="1">
    <location>
        <position position="95"/>
    </location>
</feature>
<feature type="disulfide bond" evidence="2">
    <location>
        <begin position="51"/>
        <end position="118"/>
    </location>
</feature>
<feature type="non-terminal residue">
    <location>
        <position position="121"/>
    </location>
</feature>
<sequence length="121" mass="13545">MDKILGASFLVLWLQLCWVSGQQKEKSDQQQVKQSPQSLIVQKGGISIINCAYENTAFDYFPWYQQFPGKGPALLIAIRPDVSEKKEGRFTISFNKSAKQFSSHIMDSQPGDSATYFCAAS</sequence>
<keyword id="KW-1064">Adaptive immunity</keyword>
<keyword id="KW-1003">Cell membrane</keyword>
<keyword id="KW-1015">Disulfide bond</keyword>
<keyword id="KW-0325">Glycoprotein</keyword>
<keyword id="KW-0391">Immunity</keyword>
<keyword id="KW-0393">Immunoglobulin domain</keyword>
<keyword id="KW-0472">Membrane</keyword>
<keyword id="KW-0675">Receptor</keyword>
<keyword id="KW-1185">Reference proteome</keyword>
<keyword id="KW-0732">Signal</keyword>
<keyword id="KW-1279">T cell receptor</keyword>
<accession>A0A075B6W5</accession>
<dbReference type="EMBL" id="AC245505">
    <property type="status" value="NOT_ANNOTATED_CDS"/>
    <property type="molecule type" value="Genomic_DNA"/>
</dbReference>
<dbReference type="SMR" id="A0A075B6W5"/>
<dbReference type="FunCoup" id="A0A075B6W5">
    <property type="interactions" value="345"/>
</dbReference>
<dbReference type="IMGT_GENE-DB" id="TRAV23DV6"/>
<dbReference type="GlyCosmos" id="A0A075B6W5">
    <property type="glycosylation" value="1 site, No reported glycans"/>
</dbReference>
<dbReference type="GlyGen" id="A0A075B6W5">
    <property type="glycosylation" value="1 site"/>
</dbReference>
<dbReference type="BioMuta" id="TRAV23DV6"/>
<dbReference type="Ensembl" id="ENST00000390451.2">
    <property type="protein sequence ID" value="ENSP00000451203.1"/>
    <property type="gene ID" value="ENSG00000211803.2"/>
</dbReference>
<dbReference type="UCSC" id="uc058zed.1">
    <property type="organism name" value="human"/>
</dbReference>
<dbReference type="AGR" id="HGNC:12120"/>
<dbReference type="GeneCards" id="TRAV23DV6"/>
<dbReference type="HGNC" id="HGNC:12120">
    <property type="gene designation" value="TRAV23DV6"/>
</dbReference>
<dbReference type="HPA" id="ENSG00000211803">
    <property type="expression patterns" value="Tissue enriched (lymphoid)"/>
</dbReference>
<dbReference type="neXtProt" id="NX_A0A075B6W5"/>
<dbReference type="OpenTargets" id="ENSG00000211803"/>
<dbReference type="VEuPathDB" id="HostDB:ENSG00000211803"/>
<dbReference type="GeneTree" id="ENSGT00940000153130"/>
<dbReference type="HOGENOM" id="CLU_077975_8_3_1"/>
<dbReference type="InParanoid" id="A0A075B6W5"/>
<dbReference type="OMA" id="NYFPWYR"/>
<dbReference type="OrthoDB" id="9837549at2759"/>
<dbReference type="PAN-GO" id="A0A075B6W5">
    <property type="GO annotations" value="1 GO annotation based on evolutionary models"/>
</dbReference>
<dbReference type="PathwayCommons" id="A0A075B6W5"/>
<dbReference type="ChiTaRS" id="TRAV23DV6">
    <property type="organism name" value="human"/>
</dbReference>
<dbReference type="Pharos" id="A0A075B6W5">
    <property type="development level" value="Tdark"/>
</dbReference>
<dbReference type="PRO" id="PR:A0A075B6W5"/>
<dbReference type="Proteomes" id="UP000005640">
    <property type="component" value="Chromosome 14"/>
</dbReference>
<dbReference type="RNAct" id="A0A075B6W5">
    <property type="molecule type" value="protein"/>
</dbReference>
<dbReference type="Bgee" id="ENSG00000211803">
    <property type="expression patterns" value="Expressed in granulocyte and 90 other cell types or tissues"/>
</dbReference>
<dbReference type="GO" id="GO:0042101">
    <property type="term" value="C:T cell receptor complex"/>
    <property type="evidence" value="ECO:0007669"/>
    <property type="project" value="UniProtKB-KW"/>
</dbReference>
<dbReference type="GO" id="GO:0042605">
    <property type="term" value="F:peptide antigen binding"/>
    <property type="evidence" value="ECO:0000318"/>
    <property type="project" value="GO_Central"/>
</dbReference>
<dbReference type="GO" id="GO:0002250">
    <property type="term" value="P:adaptive immune response"/>
    <property type="evidence" value="ECO:0007669"/>
    <property type="project" value="UniProtKB-KW"/>
</dbReference>
<dbReference type="CDD" id="cd04983">
    <property type="entry name" value="IgV_TCR_alpha"/>
    <property type="match status" value="1"/>
</dbReference>
<dbReference type="Gene3D" id="2.60.40.10">
    <property type="entry name" value="Immunoglobulins"/>
    <property type="match status" value="1"/>
</dbReference>
<dbReference type="InterPro" id="IPR007110">
    <property type="entry name" value="Ig-like_dom"/>
</dbReference>
<dbReference type="InterPro" id="IPR036179">
    <property type="entry name" value="Ig-like_dom_sf"/>
</dbReference>
<dbReference type="InterPro" id="IPR013783">
    <property type="entry name" value="Ig-like_fold"/>
</dbReference>
<dbReference type="InterPro" id="IPR013106">
    <property type="entry name" value="Ig_V-set"/>
</dbReference>
<dbReference type="InterPro" id="IPR051006">
    <property type="entry name" value="TCR_variable_domain"/>
</dbReference>
<dbReference type="PANTHER" id="PTHR19343">
    <property type="entry name" value="T CELL RECEPTOR ALPHA VARIABLE 1-2"/>
    <property type="match status" value="1"/>
</dbReference>
<dbReference type="PANTHER" id="PTHR19343:SF0">
    <property type="entry name" value="T CELL RECEPTOR ALPHA VARIABLE 23_DELTA VARIABLE 6"/>
    <property type="match status" value="1"/>
</dbReference>
<dbReference type="Pfam" id="PF07686">
    <property type="entry name" value="V-set"/>
    <property type="match status" value="1"/>
</dbReference>
<dbReference type="SMART" id="SM00406">
    <property type="entry name" value="IGv"/>
    <property type="match status" value="1"/>
</dbReference>
<dbReference type="SUPFAM" id="SSF48726">
    <property type="entry name" value="Immunoglobulin"/>
    <property type="match status" value="1"/>
</dbReference>
<dbReference type="PROSITE" id="PS50835">
    <property type="entry name" value="IG_LIKE"/>
    <property type="match status" value="1"/>
</dbReference>
<name>TVA23_HUMAN</name>
<reference key="1">
    <citation type="journal article" date="2003" name="Nature">
        <title>The DNA sequence and analysis of human chromosome 14.</title>
        <authorList>
            <person name="Heilig R."/>
            <person name="Eckenberg R."/>
            <person name="Petit J.-L."/>
            <person name="Fonknechten N."/>
            <person name="Da Silva C."/>
            <person name="Cattolico L."/>
            <person name="Levy M."/>
            <person name="Barbe V."/>
            <person name="De Berardinis V."/>
            <person name="Ureta-Vidal A."/>
            <person name="Pelletier E."/>
            <person name="Vico V."/>
            <person name="Anthouard V."/>
            <person name="Rowen L."/>
            <person name="Madan A."/>
            <person name="Qin S."/>
            <person name="Sun H."/>
            <person name="Du H."/>
            <person name="Pepin K."/>
            <person name="Artiguenave F."/>
            <person name="Robert C."/>
            <person name="Cruaud C."/>
            <person name="Bruels T."/>
            <person name="Jaillon O."/>
            <person name="Friedlander L."/>
            <person name="Samson G."/>
            <person name="Brottier P."/>
            <person name="Cure S."/>
            <person name="Segurens B."/>
            <person name="Aniere F."/>
            <person name="Samain S."/>
            <person name="Crespeau H."/>
            <person name="Abbasi N."/>
            <person name="Aiach N."/>
            <person name="Boscus D."/>
            <person name="Dickhoff R."/>
            <person name="Dors M."/>
            <person name="Dubois I."/>
            <person name="Friedman C."/>
            <person name="Gouyvenoux M."/>
            <person name="James R."/>
            <person name="Madan A."/>
            <person name="Mairey-Estrada B."/>
            <person name="Mangenot S."/>
            <person name="Martins N."/>
            <person name="Menard M."/>
            <person name="Oztas S."/>
            <person name="Ratcliffe A."/>
            <person name="Shaffer T."/>
            <person name="Trask B."/>
            <person name="Vacherie B."/>
            <person name="Bellemere C."/>
            <person name="Belser C."/>
            <person name="Besnard-Gonnet M."/>
            <person name="Bartol-Mavel D."/>
            <person name="Boutard M."/>
            <person name="Briez-Silla S."/>
            <person name="Combette S."/>
            <person name="Dufosse-Laurent V."/>
            <person name="Ferron C."/>
            <person name="Lechaplais C."/>
            <person name="Louesse C."/>
            <person name="Muselet D."/>
            <person name="Magdelenat G."/>
            <person name="Pateau E."/>
            <person name="Petit E."/>
            <person name="Sirvain-Trukniewicz P."/>
            <person name="Trybou A."/>
            <person name="Vega-Czarny N."/>
            <person name="Bataille E."/>
            <person name="Bluet E."/>
            <person name="Bordelais I."/>
            <person name="Dubois M."/>
            <person name="Dumont C."/>
            <person name="Guerin T."/>
            <person name="Haffray S."/>
            <person name="Hammadi R."/>
            <person name="Muanga J."/>
            <person name="Pellouin V."/>
            <person name="Robert D."/>
            <person name="Wunderle E."/>
            <person name="Gauguet G."/>
            <person name="Roy A."/>
            <person name="Sainte-Marthe L."/>
            <person name="Verdier J."/>
            <person name="Verdier-Discala C."/>
            <person name="Hillier L.W."/>
            <person name="Fulton L."/>
            <person name="McPherson J."/>
            <person name="Matsuda F."/>
            <person name="Wilson R."/>
            <person name="Scarpelli C."/>
            <person name="Gyapay G."/>
            <person name="Wincker P."/>
            <person name="Saurin W."/>
            <person name="Quetier F."/>
            <person name="Waterston R."/>
            <person name="Hood L."/>
            <person name="Weissenbach J."/>
        </authorList>
    </citation>
    <scope>NUCLEOTIDE SEQUENCE [LARGE SCALE GENOMIC DNA] (IMGT ALLELE TRAV23/DV6*01)</scope>
</reference>
<reference key="2">
    <citation type="book" date="2001" name="The T Cell Receptor FactsBook.">
        <title>The T Cell Receptor FactsBook.</title>
        <editorList>
            <person name="Lefranc M.P."/>
            <person name="Lefranc G."/>
        </editorList>
        <authorList>
            <person name="Lefranc M.P."/>
            <person name="Lefranc G."/>
        </authorList>
    </citation>
    <scope>NOMENCLATURE</scope>
</reference>
<reference key="3">
    <citation type="journal article" date="2004" name="Nat. Rev. Immunol.">
        <title>The many important facets of T-cell repertoire diversity.</title>
        <authorList>
            <person name="Nikolich-Zugich J."/>
            <person name="Slifka M.K."/>
            <person name="Messaoudi I."/>
        </authorList>
    </citation>
    <scope>REVIEW ON T CELL REPERTOIRE DIVERSITY</scope>
</reference>
<reference key="4">
    <citation type="journal article" date="2010" name="Cold Spring Harb. Perspect. Biol.">
        <title>Structural biology of the T-cell receptor: insights into receptor assembly, ligand recognition, and initiation of signaling.</title>
        <authorList>
            <person name="Wucherpfennig K.W."/>
            <person name="Gagnon E."/>
            <person name="Call M.J."/>
            <person name="Huseby E.S."/>
            <person name="Call M.E."/>
        </authorList>
    </citation>
    <scope>REVIEW ON T CELL RECEPTOR-CD3 COMPLEX ASSEMBLY</scope>
    <scope>SUBCELLULAR LOCATION</scope>
</reference>
<reference key="5">
    <citation type="journal article" date="2013" name="Nat. Rev. Immunol.">
        <title>T cell receptor signalling networks: branched, diversified and bounded.</title>
        <authorList>
            <person name="Brownlie R.J."/>
            <person name="Zamoyska R."/>
        </authorList>
    </citation>
    <scope>REVIEW ON T CELL RECEPTOR SIGNALING</scope>
</reference>
<reference key="6">
    <citation type="journal article" date="2014" name="Front. Immunol.">
        <title>Immunoglobulin and T Cell Receptor Genes: IMGT((R)) and the Birth and Rise of Immunoinformatics.</title>
        <authorList>
            <person name="Lefranc M.P."/>
        </authorList>
    </citation>
    <scope>NOMENCLATURE</scope>
</reference>
<reference key="7">
    <citation type="journal article" date="2015" name="Annu. Rev. Immunol.">
        <title>T cell antigen receptor recognition of antigen-presenting molecules.</title>
        <authorList>
            <person name="Rossjohn J."/>
            <person name="Gras S."/>
            <person name="Miles J.J."/>
            <person name="Turner S.J."/>
            <person name="Godfrey D.I."/>
            <person name="McCluskey J."/>
        </authorList>
    </citation>
    <scope>REVIEW ON FUNCTION</scope>
</reference>
<organism>
    <name type="scientific">Homo sapiens</name>
    <name type="common">Human</name>
    <dbReference type="NCBI Taxonomy" id="9606"/>
    <lineage>
        <taxon>Eukaryota</taxon>
        <taxon>Metazoa</taxon>
        <taxon>Chordata</taxon>
        <taxon>Craniata</taxon>
        <taxon>Vertebrata</taxon>
        <taxon>Euteleostomi</taxon>
        <taxon>Mammalia</taxon>
        <taxon>Eutheria</taxon>
        <taxon>Euarchontoglires</taxon>
        <taxon>Primates</taxon>
        <taxon>Haplorrhini</taxon>
        <taxon>Catarrhini</taxon>
        <taxon>Hominidae</taxon>
        <taxon>Homo</taxon>
    </lineage>
</organism>